<accession>Q5KWS2</accession>
<feature type="chain" id="PRO_0000149386" description="Adenine phosphoribosyltransferase">
    <location>
        <begin position="1"/>
        <end position="170"/>
    </location>
</feature>
<comment type="function">
    <text evidence="1">Catalyzes a salvage reaction resulting in the formation of AMP, that is energically less costly than de novo synthesis.</text>
</comment>
<comment type="catalytic activity">
    <reaction evidence="1">
        <text>AMP + diphosphate = 5-phospho-alpha-D-ribose 1-diphosphate + adenine</text>
        <dbReference type="Rhea" id="RHEA:16609"/>
        <dbReference type="ChEBI" id="CHEBI:16708"/>
        <dbReference type="ChEBI" id="CHEBI:33019"/>
        <dbReference type="ChEBI" id="CHEBI:58017"/>
        <dbReference type="ChEBI" id="CHEBI:456215"/>
        <dbReference type="EC" id="2.4.2.7"/>
    </reaction>
</comment>
<comment type="pathway">
    <text evidence="1">Purine metabolism; AMP biosynthesis via salvage pathway; AMP from adenine: step 1/1.</text>
</comment>
<comment type="subunit">
    <text evidence="1">Homodimer.</text>
</comment>
<comment type="subcellular location">
    <subcellularLocation>
        <location evidence="1">Cytoplasm</location>
    </subcellularLocation>
</comment>
<comment type="similarity">
    <text evidence="1">Belongs to the purine/pyrimidine phosphoribosyltransferase family.</text>
</comment>
<evidence type="ECO:0000255" key="1">
    <source>
        <dbReference type="HAMAP-Rule" id="MF_00004"/>
    </source>
</evidence>
<gene>
    <name evidence="1" type="primary">apt</name>
    <name type="ordered locus">GK2579</name>
</gene>
<organism>
    <name type="scientific">Geobacillus kaustophilus (strain HTA426)</name>
    <dbReference type="NCBI Taxonomy" id="235909"/>
    <lineage>
        <taxon>Bacteria</taxon>
        <taxon>Bacillati</taxon>
        <taxon>Bacillota</taxon>
        <taxon>Bacilli</taxon>
        <taxon>Bacillales</taxon>
        <taxon>Anoxybacillaceae</taxon>
        <taxon>Geobacillus</taxon>
        <taxon>Geobacillus thermoleovorans group</taxon>
    </lineage>
</organism>
<keyword id="KW-0963">Cytoplasm</keyword>
<keyword id="KW-0328">Glycosyltransferase</keyword>
<keyword id="KW-0660">Purine salvage</keyword>
<keyword id="KW-1185">Reference proteome</keyword>
<keyword id="KW-0808">Transferase</keyword>
<reference key="1">
    <citation type="journal article" date="2004" name="Nucleic Acids Res.">
        <title>Thermoadaptation trait revealed by the genome sequence of thermophilic Geobacillus kaustophilus.</title>
        <authorList>
            <person name="Takami H."/>
            <person name="Takaki Y."/>
            <person name="Chee G.-J."/>
            <person name="Nishi S."/>
            <person name="Shimamura S."/>
            <person name="Suzuki H."/>
            <person name="Matsui S."/>
            <person name="Uchiyama I."/>
        </authorList>
    </citation>
    <scope>NUCLEOTIDE SEQUENCE [LARGE SCALE GENOMIC DNA]</scope>
    <source>
        <strain>HTA426</strain>
    </source>
</reference>
<proteinExistence type="inferred from homology"/>
<name>APT_GEOKA</name>
<dbReference type="EC" id="2.4.2.7" evidence="1"/>
<dbReference type="EMBL" id="BA000043">
    <property type="protein sequence ID" value="BAD76864.1"/>
    <property type="molecule type" value="Genomic_DNA"/>
</dbReference>
<dbReference type="RefSeq" id="WP_011232056.1">
    <property type="nucleotide sequence ID" value="NC_006510.1"/>
</dbReference>
<dbReference type="SMR" id="Q5KWS2"/>
<dbReference type="STRING" id="235909.GK2579"/>
<dbReference type="KEGG" id="gka:GK2579"/>
<dbReference type="PATRIC" id="fig|235909.7.peg.2759"/>
<dbReference type="eggNOG" id="COG0503">
    <property type="taxonomic scope" value="Bacteria"/>
</dbReference>
<dbReference type="HOGENOM" id="CLU_063339_3_0_9"/>
<dbReference type="UniPathway" id="UPA00588">
    <property type="reaction ID" value="UER00646"/>
</dbReference>
<dbReference type="Proteomes" id="UP000001172">
    <property type="component" value="Chromosome"/>
</dbReference>
<dbReference type="GO" id="GO:0005737">
    <property type="term" value="C:cytoplasm"/>
    <property type="evidence" value="ECO:0007669"/>
    <property type="project" value="UniProtKB-SubCell"/>
</dbReference>
<dbReference type="GO" id="GO:0002055">
    <property type="term" value="F:adenine binding"/>
    <property type="evidence" value="ECO:0007669"/>
    <property type="project" value="TreeGrafter"/>
</dbReference>
<dbReference type="GO" id="GO:0003999">
    <property type="term" value="F:adenine phosphoribosyltransferase activity"/>
    <property type="evidence" value="ECO:0007669"/>
    <property type="project" value="UniProtKB-UniRule"/>
</dbReference>
<dbReference type="GO" id="GO:0016208">
    <property type="term" value="F:AMP binding"/>
    <property type="evidence" value="ECO:0007669"/>
    <property type="project" value="TreeGrafter"/>
</dbReference>
<dbReference type="GO" id="GO:0006168">
    <property type="term" value="P:adenine salvage"/>
    <property type="evidence" value="ECO:0007669"/>
    <property type="project" value="InterPro"/>
</dbReference>
<dbReference type="GO" id="GO:0044209">
    <property type="term" value="P:AMP salvage"/>
    <property type="evidence" value="ECO:0007669"/>
    <property type="project" value="UniProtKB-UniRule"/>
</dbReference>
<dbReference type="GO" id="GO:0006166">
    <property type="term" value="P:purine ribonucleoside salvage"/>
    <property type="evidence" value="ECO:0007669"/>
    <property type="project" value="UniProtKB-KW"/>
</dbReference>
<dbReference type="CDD" id="cd06223">
    <property type="entry name" value="PRTases_typeI"/>
    <property type="match status" value="1"/>
</dbReference>
<dbReference type="FunFam" id="3.40.50.2020:FF:000004">
    <property type="entry name" value="Adenine phosphoribosyltransferase"/>
    <property type="match status" value="1"/>
</dbReference>
<dbReference type="Gene3D" id="3.40.50.2020">
    <property type="match status" value="1"/>
</dbReference>
<dbReference type="HAMAP" id="MF_00004">
    <property type="entry name" value="Aden_phosphoribosyltr"/>
    <property type="match status" value="1"/>
</dbReference>
<dbReference type="InterPro" id="IPR005764">
    <property type="entry name" value="Ade_phspho_trans"/>
</dbReference>
<dbReference type="InterPro" id="IPR000836">
    <property type="entry name" value="PRibTrfase_dom"/>
</dbReference>
<dbReference type="InterPro" id="IPR029057">
    <property type="entry name" value="PRTase-like"/>
</dbReference>
<dbReference type="InterPro" id="IPR050054">
    <property type="entry name" value="UPRTase/APRTase"/>
</dbReference>
<dbReference type="NCBIfam" id="TIGR01090">
    <property type="entry name" value="apt"/>
    <property type="match status" value="1"/>
</dbReference>
<dbReference type="NCBIfam" id="NF002633">
    <property type="entry name" value="PRK02304.1-2"/>
    <property type="match status" value="1"/>
</dbReference>
<dbReference type="NCBIfam" id="NF002634">
    <property type="entry name" value="PRK02304.1-3"/>
    <property type="match status" value="1"/>
</dbReference>
<dbReference type="NCBIfam" id="NF002636">
    <property type="entry name" value="PRK02304.1-5"/>
    <property type="match status" value="1"/>
</dbReference>
<dbReference type="PANTHER" id="PTHR32315">
    <property type="entry name" value="ADENINE PHOSPHORIBOSYLTRANSFERASE"/>
    <property type="match status" value="1"/>
</dbReference>
<dbReference type="PANTHER" id="PTHR32315:SF3">
    <property type="entry name" value="ADENINE PHOSPHORIBOSYLTRANSFERASE"/>
    <property type="match status" value="1"/>
</dbReference>
<dbReference type="Pfam" id="PF00156">
    <property type="entry name" value="Pribosyltran"/>
    <property type="match status" value="1"/>
</dbReference>
<dbReference type="SUPFAM" id="SSF53271">
    <property type="entry name" value="PRTase-like"/>
    <property type="match status" value="1"/>
</dbReference>
<sequence>MDLKQYITIVPDFPKPGIMFKDITTLMDNGPAYKYATDQIVQYAREKQIEIVVGPEARGFIIGCPVAYALGVGFAPVRKEGKLPREVVRVEYGLEYGTDVLTMHKDAIKPGQRVLITDDLLATGGTMRATIDLVEQLGGVVAGLAFLIELTELGGRKKLEGYDILTLMQF</sequence>
<protein>
    <recommendedName>
        <fullName evidence="1">Adenine phosphoribosyltransferase</fullName>
        <shortName evidence="1">APRT</shortName>
        <ecNumber evidence="1">2.4.2.7</ecNumber>
    </recommendedName>
</protein>